<comment type="function">
    <text evidence="3">Has antibacterial activity.</text>
</comment>
<comment type="subcellular location">
    <subcellularLocation>
        <location evidence="3">Secreted</location>
    </subcellularLocation>
</comment>
<comment type="similarity">
    <text evidence="3">Belongs to the beta-defensin family.</text>
</comment>
<gene>
    <name type="primary">DEFB133</name>
</gene>
<dbReference type="EMBL" id="DQ012084">
    <property type="protein sequence ID" value="AAY59814.1"/>
    <property type="molecule type" value="mRNA"/>
</dbReference>
<dbReference type="RefSeq" id="NP_001123364.1">
    <property type="nucleotide sequence ID" value="NM_001129892.1"/>
</dbReference>
<dbReference type="PaxDb" id="9598-ENSPTRP00000054243"/>
<dbReference type="eggNOG" id="ENOG502TEXM">
    <property type="taxonomic scope" value="Eukaryota"/>
</dbReference>
<dbReference type="InParanoid" id="Q30KJ6"/>
<dbReference type="Proteomes" id="UP000002277">
    <property type="component" value="Unplaced"/>
</dbReference>
<dbReference type="GO" id="GO:0005615">
    <property type="term" value="C:extracellular space"/>
    <property type="evidence" value="ECO:0000318"/>
    <property type="project" value="GO_Central"/>
</dbReference>
<dbReference type="GO" id="GO:0031731">
    <property type="term" value="F:CCR6 chemokine receptor binding"/>
    <property type="evidence" value="ECO:0000318"/>
    <property type="project" value="GO_Central"/>
</dbReference>
<dbReference type="GO" id="GO:0042056">
    <property type="term" value="F:chemoattractant activity"/>
    <property type="evidence" value="ECO:0000318"/>
    <property type="project" value="GO_Central"/>
</dbReference>
<dbReference type="GO" id="GO:0060326">
    <property type="term" value="P:cell chemotaxis"/>
    <property type="evidence" value="ECO:0000318"/>
    <property type="project" value="GO_Central"/>
</dbReference>
<dbReference type="GO" id="GO:0042742">
    <property type="term" value="P:defense response to bacterium"/>
    <property type="evidence" value="ECO:0000318"/>
    <property type="project" value="GO_Central"/>
</dbReference>
<dbReference type="GO" id="GO:0045087">
    <property type="term" value="P:innate immune response"/>
    <property type="evidence" value="ECO:0007669"/>
    <property type="project" value="InterPro"/>
</dbReference>
<dbReference type="InterPro" id="IPR025933">
    <property type="entry name" value="Beta_defensin_dom"/>
</dbReference>
<dbReference type="PANTHER" id="PTHR20515">
    <property type="entry name" value="BETA-DEFENSIN"/>
    <property type="match status" value="1"/>
</dbReference>
<dbReference type="PANTHER" id="PTHR20515:SF17">
    <property type="entry name" value="BETA-DEFENSIN 133"/>
    <property type="match status" value="1"/>
</dbReference>
<dbReference type="Pfam" id="PF13841">
    <property type="entry name" value="Defensin_beta_2"/>
    <property type="match status" value="1"/>
</dbReference>
<organism>
    <name type="scientific">Pan troglodytes</name>
    <name type="common">Chimpanzee</name>
    <dbReference type="NCBI Taxonomy" id="9598"/>
    <lineage>
        <taxon>Eukaryota</taxon>
        <taxon>Metazoa</taxon>
        <taxon>Chordata</taxon>
        <taxon>Craniata</taxon>
        <taxon>Vertebrata</taxon>
        <taxon>Euteleostomi</taxon>
        <taxon>Mammalia</taxon>
        <taxon>Eutheria</taxon>
        <taxon>Euarchontoglires</taxon>
        <taxon>Primates</taxon>
        <taxon>Haplorrhini</taxon>
        <taxon>Catarrhini</taxon>
        <taxon>Hominidae</taxon>
        <taxon>Pan</taxon>
    </lineage>
</organism>
<name>DB133_PANTR</name>
<proteinExistence type="inferred from homology"/>
<keyword id="KW-0044">Antibiotic</keyword>
<keyword id="KW-0929">Antimicrobial</keyword>
<keyword id="KW-0211">Defensin</keyword>
<keyword id="KW-1015">Disulfide bond</keyword>
<keyword id="KW-1185">Reference proteome</keyword>
<keyword id="KW-0964">Secreted</keyword>
<keyword id="KW-0732">Signal</keyword>
<evidence type="ECO:0000250" key="1"/>
<evidence type="ECO:0000255" key="2"/>
<evidence type="ECO:0000305" key="3"/>
<accession>Q30KJ6</accession>
<protein>
    <recommendedName>
        <fullName>Beta-defensin 133</fullName>
    </recommendedName>
    <alternativeName>
        <fullName>Defensin, beta 133</fullName>
    </alternativeName>
</protein>
<feature type="signal peptide" evidence="2">
    <location>
        <begin position="1"/>
        <end position="21"/>
    </location>
</feature>
<feature type="chain" id="PRO_0000045359" description="Beta-defensin 133">
    <location>
        <begin position="22"/>
        <end position="62"/>
    </location>
</feature>
<feature type="disulfide bond" evidence="1">
    <location>
        <begin position="32"/>
        <end position="60"/>
    </location>
</feature>
<feature type="disulfide bond" evidence="1">
    <location>
        <begin position="39"/>
        <end position="53"/>
    </location>
</feature>
<reference key="1">
    <citation type="journal article" date="2005" name="Physiol. Genomics">
        <title>Cross-species analysis of the mammalian beta-defensin gene family: presence of syntenic gene clusters and preferential expression in the male reproductive tract.</title>
        <authorList>
            <person name="Patil A.A."/>
            <person name="Cai Y."/>
            <person name="Sang Y."/>
            <person name="Blecha F."/>
            <person name="Zhang G."/>
        </authorList>
    </citation>
    <scope>NUCLEOTIDE SEQUENCE [MRNA]</scope>
</reference>
<sequence length="62" mass="7252">MKIHIFLFVLFFFLVPIATRGVKCAVKDTYSCFIVRGKCRHECHDFEKPIGFCTKLNANCYM</sequence>